<feature type="chain" id="PRO_1000017208" description="tRNA pseudouridine synthase A">
    <location>
        <begin position="1"/>
        <end position="266"/>
    </location>
</feature>
<feature type="active site" description="Nucleophile" evidence="1">
    <location>
        <position position="53"/>
    </location>
</feature>
<feature type="binding site" evidence="1">
    <location>
        <position position="109"/>
    </location>
    <ligand>
        <name>substrate</name>
    </ligand>
</feature>
<proteinExistence type="inferred from homology"/>
<keyword id="KW-0413">Isomerase</keyword>
<keyword id="KW-1185">Reference proteome</keyword>
<keyword id="KW-0819">tRNA processing</keyword>
<protein>
    <recommendedName>
        <fullName evidence="1">tRNA pseudouridine synthase A</fullName>
        <ecNumber evidence="1">5.4.99.12</ecNumber>
    </recommendedName>
    <alternativeName>
        <fullName evidence="1">tRNA pseudouridine(38-40) synthase</fullName>
    </alternativeName>
    <alternativeName>
        <fullName evidence="1">tRNA pseudouridylate synthase I</fullName>
    </alternativeName>
    <alternativeName>
        <fullName evidence="1">tRNA-uridine isomerase I</fullName>
    </alternativeName>
</protein>
<dbReference type="EC" id="5.4.99.12" evidence="1"/>
<dbReference type="EMBL" id="AM114193">
    <property type="protein sequence ID" value="CAJ37345.1"/>
    <property type="molecule type" value="Genomic_DNA"/>
</dbReference>
<dbReference type="RefSeq" id="WP_012035236.1">
    <property type="nucleotide sequence ID" value="NC_009464.1"/>
</dbReference>
<dbReference type="SMR" id="Q0W2P8"/>
<dbReference type="STRING" id="351160.RCIX2227"/>
<dbReference type="GeneID" id="5144253"/>
<dbReference type="KEGG" id="rci:RCIX2227"/>
<dbReference type="PATRIC" id="fig|351160.9.peg.938"/>
<dbReference type="eggNOG" id="arCOG04449">
    <property type="taxonomic scope" value="Archaea"/>
</dbReference>
<dbReference type="OrthoDB" id="25720at2157"/>
<dbReference type="Proteomes" id="UP000000663">
    <property type="component" value="Chromosome"/>
</dbReference>
<dbReference type="GO" id="GO:0003723">
    <property type="term" value="F:RNA binding"/>
    <property type="evidence" value="ECO:0007669"/>
    <property type="project" value="InterPro"/>
</dbReference>
<dbReference type="GO" id="GO:0160147">
    <property type="term" value="F:tRNA pseudouridine(38-40) synthase activity"/>
    <property type="evidence" value="ECO:0007669"/>
    <property type="project" value="UniProtKB-EC"/>
</dbReference>
<dbReference type="GO" id="GO:0031119">
    <property type="term" value="P:tRNA pseudouridine synthesis"/>
    <property type="evidence" value="ECO:0007669"/>
    <property type="project" value="UniProtKB-UniRule"/>
</dbReference>
<dbReference type="FunFam" id="3.30.70.580:FF:000001">
    <property type="entry name" value="tRNA pseudouridine synthase A"/>
    <property type="match status" value="1"/>
</dbReference>
<dbReference type="Gene3D" id="3.30.70.660">
    <property type="entry name" value="Pseudouridine synthase I, catalytic domain, C-terminal subdomain"/>
    <property type="match status" value="1"/>
</dbReference>
<dbReference type="Gene3D" id="3.30.70.580">
    <property type="entry name" value="Pseudouridine synthase I, catalytic domain, N-terminal subdomain"/>
    <property type="match status" value="1"/>
</dbReference>
<dbReference type="HAMAP" id="MF_00171">
    <property type="entry name" value="TruA"/>
    <property type="match status" value="1"/>
</dbReference>
<dbReference type="InterPro" id="IPR020103">
    <property type="entry name" value="PsdUridine_synth_cat_dom_sf"/>
</dbReference>
<dbReference type="InterPro" id="IPR001406">
    <property type="entry name" value="PsdUridine_synth_TruA"/>
</dbReference>
<dbReference type="InterPro" id="IPR020097">
    <property type="entry name" value="PsdUridine_synth_TruA_a/b_dom"/>
</dbReference>
<dbReference type="InterPro" id="IPR020095">
    <property type="entry name" value="PsdUridine_synth_TruA_C"/>
</dbReference>
<dbReference type="InterPro" id="IPR020094">
    <property type="entry name" value="TruA/RsuA/RluB/E/F_N"/>
</dbReference>
<dbReference type="NCBIfam" id="TIGR00071">
    <property type="entry name" value="hisT_truA"/>
    <property type="match status" value="1"/>
</dbReference>
<dbReference type="PANTHER" id="PTHR11142">
    <property type="entry name" value="PSEUDOURIDYLATE SYNTHASE"/>
    <property type="match status" value="1"/>
</dbReference>
<dbReference type="PANTHER" id="PTHR11142:SF0">
    <property type="entry name" value="TRNA PSEUDOURIDINE SYNTHASE-LIKE 1"/>
    <property type="match status" value="1"/>
</dbReference>
<dbReference type="Pfam" id="PF01416">
    <property type="entry name" value="PseudoU_synth_1"/>
    <property type="match status" value="2"/>
</dbReference>
<dbReference type="PIRSF" id="PIRSF001430">
    <property type="entry name" value="tRNA_psdUrid_synth"/>
    <property type="match status" value="1"/>
</dbReference>
<dbReference type="SUPFAM" id="SSF55120">
    <property type="entry name" value="Pseudouridine synthase"/>
    <property type="match status" value="1"/>
</dbReference>
<organism>
    <name type="scientific">Methanocella arvoryzae (strain DSM 22066 / NBRC 105507 / MRE50)</name>
    <dbReference type="NCBI Taxonomy" id="351160"/>
    <lineage>
        <taxon>Archaea</taxon>
        <taxon>Methanobacteriati</taxon>
        <taxon>Methanobacteriota</taxon>
        <taxon>Stenosarchaea group</taxon>
        <taxon>Methanomicrobia</taxon>
        <taxon>Methanocellales</taxon>
        <taxon>Methanocellaceae</taxon>
        <taxon>Methanocella</taxon>
    </lineage>
</organism>
<evidence type="ECO:0000255" key="1">
    <source>
        <dbReference type="HAMAP-Rule" id="MF_00171"/>
    </source>
</evidence>
<accession>Q0W2P8</accession>
<sequence length="266" mass="30365">MKTALKIAYVGTNFYGSQAQPGLPTVESELRKALEEAGAIKLGTKIAMAGRTDAGVHALGQVVAFEQADPKLTAPRIINSKLPKDLWAYARAEVPDDFDPRRHATSREYRYILYAPDVIERRLKECSSRFLGTHDFTNFSSVEAGKYPVRTVTRLDIAKRGDFYIIDIEADSFLWNMVRKIVTALRLVGENKRPDGWIEKMFDPEYREGIPPAAPGGLYLSRVNYDGIAFEEDEYARQRAYQRMLNSFEWHHTIAEIYKEFKDAMK</sequence>
<reference key="1">
    <citation type="journal article" date="2006" name="Science">
        <title>Genome of rice cluster I archaea -- the key methane producers in the rice rhizosphere.</title>
        <authorList>
            <person name="Erkel C."/>
            <person name="Kube M."/>
            <person name="Reinhardt R."/>
            <person name="Liesack W."/>
        </authorList>
    </citation>
    <scope>NUCLEOTIDE SEQUENCE [LARGE SCALE GENOMIC DNA]</scope>
    <source>
        <strain>DSM 22066 / NBRC 105507 / MRE50</strain>
    </source>
</reference>
<comment type="function">
    <text evidence="1">Formation of pseudouridine at positions 38, 39 and 40 in the anticodon stem and loop of transfer RNAs.</text>
</comment>
<comment type="catalytic activity">
    <reaction evidence="1">
        <text>uridine(38/39/40) in tRNA = pseudouridine(38/39/40) in tRNA</text>
        <dbReference type="Rhea" id="RHEA:22376"/>
        <dbReference type="Rhea" id="RHEA-COMP:10085"/>
        <dbReference type="Rhea" id="RHEA-COMP:10087"/>
        <dbReference type="ChEBI" id="CHEBI:65314"/>
        <dbReference type="ChEBI" id="CHEBI:65315"/>
        <dbReference type="EC" id="5.4.99.12"/>
    </reaction>
</comment>
<comment type="similarity">
    <text evidence="1">Belongs to the tRNA pseudouridine synthase TruA family.</text>
</comment>
<gene>
    <name evidence="1" type="primary">truA</name>
    <name type="ordered locus">UNCMA_09070</name>
    <name type="ORF">RCIX2227</name>
</gene>
<name>TRUA_METAR</name>